<reference key="1">
    <citation type="journal article" date="2008" name="Plant Physiol.">
        <title>Ehd2, a rice ortholog of the maize INDETERMINATE1 gene, promotes flowering by up-regulating Ehd1.</title>
        <authorList>
            <person name="Matsubara K."/>
            <person name="Yamanouchi U."/>
            <person name="Wang Z.-X."/>
            <person name="Minobe Y."/>
            <person name="Izawa T."/>
            <person name="Yano M."/>
        </authorList>
    </citation>
    <scope>NUCLEOTIDE SEQUENCE [GENOMIC DNA / MRNA]</scope>
    <scope>FUNCTION</scope>
    <scope>DISRUPTION PHENOTYPE</scope>
    <scope>TISSUE SPECIFICITY</scope>
    <scope>DEVELOPMENTAL STAGE</scope>
    <source>
        <strain>cv. Tohoku IL9</strain>
    </source>
</reference>
<reference key="2">
    <citation type="journal article" date="2008" name="Proc. Natl. Acad. Sci. U.S.A.">
        <title>RID1, encoding a Cys2/His2-type zinc finger transcription factor, acts as a master switch from vegetative to floral development in rice.</title>
        <authorList>
            <person name="Wu C."/>
            <person name="You C."/>
            <person name="Li C."/>
            <person name="Long T."/>
            <person name="Chen G."/>
            <person name="Byrne M.E."/>
            <person name="Zhang Q."/>
        </authorList>
    </citation>
    <scope>NUCLEOTIDE SEQUENCE [GENOMIC DNA / MRNA]</scope>
    <scope>FUNCTION</scope>
    <scope>DISRUPTION PHENOTYPE</scope>
    <scope>TISSUE SPECIFICITY</scope>
    <scope>SUBCELLULAR LOCATION</scope>
    <source>
        <strain>cv. Zhonghua 11</strain>
    </source>
</reference>
<reference key="3">
    <citation type="journal article" date="2003" name="Science">
        <title>In-depth view of structure, activity, and evolution of rice chromosome 10.</title>
        <authorList>
            <person name="Yu Y."/>
            <person name="Rambo T."/>
            <person name="Currie J."/>
            <person name="Saski C."/>
            <person name="Kim H.-R."/>
            <person name="Collura K."/>
            <person name="Thompson S."/>
            <person name="Simmons J."/>
            <person name="Yang T.-J."/>
            <person name="Nah G."/>
            <person name="Patel A.J."/>
            <person name="Thurmond S."/>
            <person name="Henry D."/>
            <person name="Oates R."/>
            <person name="Palmer M."/>
            <person name="Pries G."/>
            <person name="Gibson J."/>
            <person name="Anderson H."/>
            <person name="Paradkar M."/>
            <person name="Crane L."/>
            <person name="Dale J."/>
            <person name="Carver M.B."/>
            <person name="Wood T."/>
            <person name="Frisch D."/>
            <person name="Engler F."/>
            <person name="Soderlund C."/>
            <person name="Palmer L.E."/>
            <person name="Teytelman L."/>
            <person name="Nascimento L."/>
            <person name="De la Bastide M."/>
            <person name="Spiegel L."/>
            <person name="Ware D."/>
            <person name="O'Shaughnessy A."/>
            <person name="Dike S."/>
            <person name="Dedhia N."/>
            <person name="Preston R."/>
            <person name="Huang E."/>
            <person name="Ferraro K."/>
            <person name="Kuit K."/>
            <person name="Miller B."/>
            <person name="Zutavern T."/>
            <person name="Katzenberger F."/>
            <person name="Muller S."/>
            <person name="Balija V."/>
            <person name="Martienssen R.A."/>
            <person name="Stein L."/>
            <person name="Minx P."/>
            <person name="Johnson D."/>
            <person name="Cordum H."/>
            <person name="Mardis E."/>
            <person name="Cheng Z."/>
            <person name="Jiang J."/>
            <person name="Wilson R."/>
            <person name="McCombie W.R."/>
            <person name="Wing R.A."/>
            <person name="Yuan Q."/>
            <person name="Ouyang S."/>
            <person name="Liu J."/>
            <person name="Jones K.M."/>
            <person name="Gansberger K."/>
            <person name="Moffat K."/>
            <person name="Hill J."/>
            <person name="Tsitrin T."/>
            <person name="Overton L."/>
            <person name="Bera J."/>
            <person name="Kim M."/>
            <person name="Jin S."/>
            <person name="Tallon L."/>
            <person name="Ciecko A."/>
            <person name="Pai G."/>
            <person name="Van Aken S."/>
            <person name="Utterback T."/>
            <person name="Reidmuller S."/>
            <person name="Bormann J."/>
            <person name="Feldblyum T."/>
            <person name="Hsiao J."/>
            <person name="Zismann V."/>
            <person name="Blunt S."/>
            <person name="de Vazeille A.R."/>
            <person name="Shaffer T."/>
            <person name="Koo H."/>
            <person name="Suh B."/>
            <person name="Yang Q."/>
            <person name="Haas B."/>
            <person name="Peterson J."/>
            <person name="Pertea M."/>
            <person name="Volfovsky N."/>
            <person name="Wortman J."/>
            <person name="White O."/>
            <person name="Salzberg S.L."/>
            <person name="Fraser C.M."/>
            <person name="Buell C.R."/>
            <person name="Messing J."/>
            <person name="Song R."/>
            <person name="Fuks G."/>
            <person name="Llaca V."/>
            <person name="Kovchak S."/>
            <person name="Young S."/>
            <person name="Bowers J.E."/>
            <person name="Paterson A.H."/>
            <person name="Johns M.A."/>
            <person name="Mao L."/>
            <person name="Pan H."/>
            <person name="Dean R.A."/>
        </authorList>
    </citation>
    <scope>NUCLEOTIDE SEQUENCE [LARGE SCALE GENOMIC DNA]</scope>
    <source>
        <strain>cv. Nipponbare</strain>
    </source>
</reference>
<reference key="4">
    <citation type="journal article" date="2005" name="Nature">
        <title>The map-based sequence of the rice genome.</title>
        <authorList>
            <consortium name="International rice genome sequencing project (IRGSP)"/>
        </authorList>
    </citation>
    <scope>NUCLEOTIDE SEQUENCE [LARGE SCALE GENOMIC DNA]</scope>
    <source>
        <strain>cv. Nipponbare</strain>
    </source>
</reference>
<reference key="5">
    <citation type="journal article" date="2008" name="Nucleic Acids Res.">
        <title>The rice annotation project database (RAP-DB): 2008 update.</title>
        <authorList>
            <consortium name="The rice annotation project (RAP)"/>
        </authorList>
    </citation>
    <scope>GENOME REANNOTATION</scope>
    <source>
        <strain>cv. Nipponbare</strain>
    </source>
</reference>
<reference key="6">
    <citation type="journal article" date="2013" name="Rice">
        <title>Improvement of the Oryza sativa Nipponbare reference genome using next generation sequence and optical map data.</title>
        <authorList>
            <person name="Kawahara Y."/>
            <person name="de la Bastide M."/>
            <person name="Hamilton J.P."/>
            <person name="Kanamori H."/>
            <person name="McCombie W.R."/>
            <person name="Ouyang S."/>
            <person name="Schwartz D.C."/>
            <person name="Tanaka T."/>
            <person name="Wu J."/>
            <person name="Zhou S."/>
            <person name="Childs K.L."/>
            <person name="Davidson R.M."/>
            <person name="Lin H."/>
            <person name="Quesada-Ocampo L."/>
            <person name="Vaillancourt B."/>
            <person name="Sakai H."/>
            <person name="Lee S.S."/>
            <person name="Kim J."/>
            <person name="Numa H."/>
            <person name="Itoh T."/>
            <person name="Buell C.R."/>
            <person name="Matsumoto T."/>
        </authorList>
    </citation>
    <scope>GENOME REANNOTATION</scope>
    <source>
        <strain>cv. Nipponbare</strain>
    </source>
</reference>
<reference key="7">
    <citation type="journal article" date="2005" name="PLoS Biol.">
        <title>The genomes of Oryza sativa: a history of duplications.</title>
        <authorList>
            <person name="Yu J."/>
            <person name="Wang J."/>
            <person name="Lin W."/>
            <person name="Li S."/>
            <person name="Li H."/>
            <person name="Zhou J."/>
            <person name="Ni P."/>
            <person name="Dong W."/>
            <person name="Hu S."/>
            <person name="Zeng C."/>
            <person name="Zhang J."/>
            <person name="Zhang Y."/>
            <person name="Li R."/>
            <person name="Xu Z."/>
            <person name="Li S."/>
            <person name="Li X."/>
            <person name="Zheng H."/>
            <person name="Cong L."/>
            <person name="Lin L."/>
            <person name="Yin J."/>
            <person name="Geng J."/>
            <person name="Li G."/>
            <person name="Shi J."/>
            <person name="Liu J."/>
            <person name="Lv H."/>
            <person name="Li J."/>
            <person name="Wang J."/>
            <person name="Deng Y."/>
            <person name="Ran L."/>
            <person name="Shi X."/>
            <person name="Wang X."/>
            <person name="Wu Q."/>
            <person name="Li C."/>
            <person name="Ren X."/>
            <person name="Wang J."/>
            <person name="Wang X."/>
            <person name="Li D."/>
            <person name="Liu D."/>
            <person name="Zhang X."/>
            <person name="Ji Z."/>
            <person name="Zhao W."/>
            <person name="Sun Y."/>
            <person name="Zhang Z."/>
            <person name="Bao J."/>
            <person name="Han Y."/>
            <person name="Dong L."/>
            <person name="Ji J."/>
            <person name="Chen P."/>
            <person name="Wu S."/>
            <person name="Liu J."/>
            <person name="Xiao Y."/>
            <person name="Bu D."/>
            <person name="Tan J."/>
            <person name="Yang L."/>
            <person name="Ye C."/>
            <person name="Zhang J."/>
            <person name="Xu J."/>
            <person name="Zhou Y."/>
            <person name="Yu Y."/>
            <person name="Zhang B."/>
            <person name="Zhuang S."/>
            <person name="Wei H."/>
            <person name="Liu B."/>
            <person name="Lei M."/>
            <person name="Yu H."/>
            <person name="Li Y."/>
            <person name="Xu H."/>
            <person name="Wei S."/>
            <person name="He X."/>
            <person name="Fang L."/>
            <person name="Zhang Z."/>
            <person name="Zhang Y."/>
            <person name="Huang X."/>
            <person name="Su Z."/>
            <person name="Tong W."/>
            <person name="Li J."/>
            <person name="Tong Z."/>
            <person name="Li S."/>
            <person name="Ye J."/>
            <person name="Wang L."/>
            <person name="Fang L."/>
            <person name="Lei T."/>
            <person name="Chen C.-S."/>
            <person name="Chen H.-C."/>
            <person name="Xu Z."/>
            <person name="Li H."/>
            <person name="Huang H."/>
            <person name="Zhang F."/>
            <person name="Xu H."/>
            <person name="Li N."/>
            <person name="Zhao C."/>
            <person name="Li S."/>
            <person name="Dong L."/>
            <person name="Huang Y."/>
            <person name="Li L."/>
            <person name="Xi Y."/>
            <person name="Qi Q."/>
            <person name="Li W."/>
            <person name="Zhang B."/>
            <person name="Hu W."/>
            <person name="Zhang Y."/>
            <person name="Tian X."/>
            <person name="Jiao Y."/>
            <person name="Liang X."/>
            <person name="Jin J."/>
            <person name="Gao L."/>
            <person name="Zheng W."/>
            <person name="Hao B."/>
            <person name="Liu S.-M."/>
            <person name="Wang W."/>
            <person name="Yuan L."/>
            <person name="Cao M."/>
            <person name="McDermott J."/>
            <person name="Samudrala R."/>
            <person name="Wang J."/>
            <person name="Wong G.K.-S."/>
            <person name="Yang H."/>
        </authorList>
    </citation>
    <scope>NUCLEOTIDE SEQUENCE [LARGE SCALE GENOMIC DNA]</scope>
    <source>
        <strain>cv. Nipponbare</strain>
    </source>
</reference>
<reference key="8">
    <citation type="journal article" date="2006" name="BMC Genomics">
        <title>The maize INDETERMINATE1 flowering time regulator defines a highly conserved zinc finger protein family in higher plants.</title>
        <authorList>
            <person name="Colasanti J."/>
            <person name="Tremblay R."/>
            <person name="Wong A.Y."/>
            <person name="Coneva V."/>
            <person name="Kozaki A."/>
            <person name="Mable B.K."/>
        </authorList>
    </citation>
    <scope>GENE FAMILY</scope>
    <scope>NOMENCLATURE</scope>
</reference>
<reference key="9">
    <citation type="journal article" date="2008" name="Plant J.">
        <title>Rice Indeterminate 1 (OsId1) is necessary for the expression of Ehd1 (Early heading date 1) regardless of photoperiod.</title>
        <authorList>
            <person name="Park S.J."/>
            <person name="Kim S.L."/>
            <person name="Lee S."/>
            <person name="Je B.I."/>
            <person name="Piao H.L."/>
            <person name="Park S.H."/>
            <person name="Kim C.M."/>
            <person name="Ryu C.-H."/>
            <person name="Park S.H."/>
            <person name="Xuan Y.H."/>
            <person name="Colasanti J."/>
            <person name="An G."/>
            <person name="Han C.D."/>
        </authorList>
    </citation>
    <scope>FUNCTION</scope>
    <scope>DISRUPTION PHENOTYPE</scope>
    <scope>TISSUE SPECIFICITY</scope>
    <scope>SUBCELLULAR LOCATION</scope>
    <scope>DEVELOPMENTAL STAGE</scope>
</reference>
<reference key="10">
    <citation type="journal article" date="2009" name="Ann. Bot.">
        <title>The molecular biology of seasonal flowering-responses in Arabidopsis and the cereals.</title>
        <authorList>
            <person name="Greenup A."/>
            <person name="Peacock W.J."/>
            <person name="Dennis E.S."/>
            <person name="Trevaskis B."/>
        </authorList>
    </citation>
    <scope>REVIEW ON FLOWERING</scope>
</reference>
<reference key="11">
    <citation type="journal article" date="2013" name="Rice">
        <title>A point mutation in the zinc finger motif of RID1/EHD2/OsID1 protein leads to outstanding yield-related traits in japonica rice variety Wuyunjing 7.</title>
        <authorList>
            <person name="Hu S."/>
            <person name="Dong G."/>
            <person name="Xu J."/>
            <person name="Su Y."/>
            <person name="Shi Z."/>
            <person name="Ye W."/>
            <person name="Li Y."/>
            <person name="Li G."/>
            <person name="Zhang B."/>
            <person name="Hu J."/>
            <person name="Qian Q."/>
            <person name="Zeng D."/>
            <person name="Guo L."/>
        </authorList>
    </citation>
    <scope>FUNCTION</scope>
    <scope>MUTAGENESIS OF PRO-158</scope>
    <scope>SUBCELLULAR LOCATION</scope>
    <scope>TISSUE SPECIFICITY</scope>
    <source>
        <strain>cv. Wuyunjing 7</strain>
    </source>
</reference>
<reference key="12">
    <citation type="journal article" date="2014" name="PLoS ONE">
        <title>Dlf1, a WRKY transcription factor, is involved in the control of flowering time and plant height in rice.</title>
        <authorList>
            <person name="Cai Y."/>
            <person name="Chen X."/>
            <person name="Xie K."/>
            <person name="Xing Q."/>
            <person name="Wu Y."/>
            <person name="Li J."/>
            <person name="Du C."/>
            <person name="Sun Z."/>
            <person name="Guo Z."/>
        </authorList>
    </citation>
    <scope>REPRESSION BY DLF1</scope>
</reference>
<reference key="13">
    <citation type="journal article" date="2015" name="Plant Cell Environ.">
        <title>Rice FLAVIN-BINDING, KELCH REPEAT, F-BOX 1 (OsFKF1) promotes flowering independent of photoperiod.</title>
        <authorList>
            <person name="Han S.-H."/>
            <person name="Yoo S.-C."/>
            <person name="Lee B.-D."/>
            <person name="An G."/>
            <person name="Paek N.-C."/>
        </authorList>
    </citation>
    <scope>INDUCTION BY FKF1</scope>
</reference>
<reference key="14">
    <citation type="journal article" date="2015" name="Sci. Rep.">
        <title>The effects of phytochrome-mediated light signals on the developmental acquisition of photoperiod sensitivity in rice.</title>
        <authorList>
            <person name="Yoshitake Y."/>
            <person name="Yokoo T."/>
            <person name="Saito H."/>
            <person name="Tsukiyama T."/>
            <person name="Quan X."/>
            <person name="Zikihara K."/>
            <person name="Katsura H."/>
            <person name="Tokutomi S."/>
            <person name="Aboshi T."/>
            <person name="Mori N."/>
            <person name="Inoue H."/>
            <person name="Nishida H."/>
            <person name="Kohchi T."/>
            <person name="Teraishi M."/>
            <person name="Okumoto Y."/>
            <person name="Tanisaka T."/>
        </authorList>
    </citation>
    <scope>REGULATION BY PHYTOCHROME</scope>
</reference>
<reference key="15">
    <citation type="journal article" date="2017" name="Front. Plant Sci.">
        <title>The importance of being on time: Regulatory networks controlling photoperiodic flowering in cereals.</title>
        <authorList>
            <person name="Brambilla V."/>
            <person name="Gomez-Ariza J."/>
            <person name="Cerise M."/>
            <person name="Fornara F."/>
        </authorList>
    </citation>
    <scope>REVIEW ON FLOWERING</scope>
</reference>
<organism>
    <name type="scientific">Oryza sativa subsp. japonica</name>
    <name type="common">Rice</name>
    <dbReference type="NCBI Taxonomy" id="39947"/>
    <lineage>
        <taxon>Eukaryota</taxon>
        <taxon>Viridiplantae</taxon>
        <taxon>Streptophyta</taxon>
        <taxon>Embryophyta</taxon>
        <taxon>Tracheophyta</taxon>
        <taxon>Spermatophyta</taxon>
        <taxon>Magnoliopsida</taxon>
        <taxon>Liliopsida</taxon>
        <taxon>Poales</taxon>
        <taxon>Poaceae</taxon>
        <taxon>BOP clade</taxon>
        <taxon>Oryzoideae</taxon>
        <taxon>Oryzeae</taxon>
        <taxon>Oryzinae</taxon>
        <taxon>Oryza</taxon>
        <taxon>Oryza sativa</taxon>
    </lineage>
</organism>
<gene>
    <name evidence="15" type="primary">EHD2</name>
    <name evidence="17" type="synonym">GHD10</name>
    <name evidence="12" type="synonym">ID</name>
    <name evidence="14" type="synonym">ID1</name>
    <name evidence="13" type="synonym">RID1</name>
    <name evidence="19" type="ordered locus">Os10g0419200</name>
    <name evidence="18" type="ordered locus">LOC_Os10g28330</name>
    <name evidence="19" type="ORF">OSNPB_100419200</name>
</gene>
<evidence type="ECO:0000250" key="1">
    <source>
        <dbReference type="UniProtKB" id="Q700D2"/>
    </source>
</evidence>
<evidence type="ECO:0000255" key="2">
    <source>
        <dbReference type="PROSITE-ProRule" id="PRU00042"/>
    </source>
</evidence>
<evidence type="ECO:0000255" key="3">
    <source>
        <dbReference type="PROSITE-ProRule" id="PRU00768"/>
    </source>
</evidence>
<evidence type="ECO:0000256" key="4">
    <source>
        <dbReference type="SAM" id="MobiDB-lite"/>
    </source>
</evidence>
<evidence type="ECO:0000269" key="5">
    <source>
    </source>
</evidence>
<evidence type="ECO:0000269" key="6">
    <source>
    </source>
</evidence>
<evidence type="ECO:0000269" key="7">
    <source>
    </source>
</evidence>
<evidence type="ECO:0000269" key="8">
    <source>
    </source>
</evidence>
<evidence type="ECO:0000269" key="9">
    <source>
    </source>
</evidence>
<evidence type="ECO:0000269" key="10">
    <source>
    </source>
</evidence>
<evidence type="ECO:0000269" key="11">
    <source>
    </source>
</evidence>
<evidence type="ECO:0000303" key="12">
    <source>
    </source>
</evidence>
<evidence type="ECO:0000303" key="13">
    <source>
    </source>
</evidence>
<evidence type="ECO:0000303" key="14">
    <source>
    </source>
</evidence>
<evidence type="ECO:0000303" key="15">
    <source>
    </source>
</evidence>
<evidence type="ECO:0000303" key="16">
    <source>
    </source>
</evidence>
<evidence type="ECO:0000303" key="17">
    <source>
    </source>
</evidence>
<evidence type="ECO:0000305" key="18"/>
<evidence type="ECO:0000312" key="19">
    <source>
        <dbReference type="EMBL" id="BAT10873.1"/>
    </source>
</evidence>
<dbReference type="EMBL" id="AB359195">
    <property type="protein sequence ID" value="BAG12102.1"/>
    <property type="molecule type" value="Genomic_DNA"/>
</dbReference>
<dbReference type="EMBL" id="AB359196">
    <property type="protein sequence ID" value="BAG12103.1"/>
    <property type="molecule type" value="mRNA"/>
</dbReference>
<dbReference type="EMBL" id="FJ009578">
    <property type="protein sequence ID" value="ACH87394.1"/>
    <property type="molecule type" value="mRNA"/>
</dbReference>
<dbReference type="EMBL" id="FJ009579">
    <property type="protein sequence ID" value="ACH87395.1"/>
    <property type="molecule type" value="Genomic_DNA"/>
</dbReference>
<dbReference type="EMBL" id="DP000086">
    <property type="protein sequence ID" value="AAP53791.1"/>
    <property type="status" value="ALT_INIT"/>
    <property type="molecule type" value="Genomic_DNA"/>
</dbReference>
<dbReference type="EMBL" id="AP008216">
    <property type="protein sequence ID" value="BAF26530.1"/>
    <property type="status" value="ALT_INIT"/>
    <property type="molecule type" value="Genomic_DNA"/>
</dbReference>
<dbReference type="EMBL" id="AP014966">
    <property type="protein sequence ID" value="BAT10873.1"/>
    <property type="molecule type" value="Genomic_DNA"/>
</dbReference>
<dbReference type="EMBL" id="CM000147">
    <property type="protein sequence ID" value="EAZ16094.1"/>
    <property type="status" value="ALT_SEQ"/>
    <property type="molecule type" value="Genomic_DNA"/>
</dbReference>
<dbReference type="RefSeq" id="XP_015614407.1">
    <property type="nucleotide sequence ID" value="XM_015758921.1"/>
</dbReference>
<dbReference type="FunCoup" id="B1B534">
    <property type="interactions" value="743"/>
</dbReference>
<dbReference type="STRING" id="39947.B1B534"/>
<dbReference type="PaxDb" id="39947-B1B534"/>
<dbReference type="EnsemblPlants" id="Os10t0419200-01">
    <property type="protein sequence ID" value="Os10t0419200-01"/>
    <property type="gene ID" value="Os10g0419200"/>
</dbReference>
<dbReference type="Gramene" id="Os10t0419200-01">
    <property type="protein sequence ID" value="Os10t0419200-01"/>
    <property type="gene ID" value="Os10g0419200"/>
</dbReference>
<dbReference type="KEGG" id="dosa:Os10g0419200"/>
<dbReference type="eggNOG" id="KOG1721">
    <property type="taxonomic scope" value="Eukaryota"/>
</dbReference>
<dbReference type="HOGENOM" id="CLU_014578_4_2_1"/>
<dbReference type="InParanoid" id="B1B534"/>
<dbReference type="OMA" id="ATTVACC"/>
<dbReference type="OrthoDB" id="6354171at2759"/>
<dbReference type="Proteomes" id="UP000000763">
    <property type="component" value="Chromosome 10"/>
</dbReference>
<dbReference type="Proteomes" id="UP000007752">
    <property type="component" value="Chromosome 10"/>
</dbReference>
<dbReference type="Proteomes" id="UP000059680">
    <property type="component" value="Chromosome 10"/>
</dbReference>
<dbReference type="GO" id="GO:0005634">
    <property type="term" value="C:nucleus"/>
    <property type="evidence" value="ECO:0000314"/>
    <property type="project" value="UniProtKB"/>
</dbReference>
<dbReference type="GO" id="GO:0003700">
    <property type="term" value="F:DNA-binding transcription factor activity"/>
    <property type="evidence" value="ECO:0000318"/>
    <property type="project" value="GO_Central"/>
</dbReference>
<dbReference type="GO" id="GO:0043565">
    <property type="term" value="F:sequence-specific DNA binding"/>
    <property type="evidence" value="ECO:0000314"/>
    <property type="project" value="UniProtKB"/>
</dbReference>
<dbReference type="GO" id="GO:0008270">
    <property type="term" value="F:zinc ion binding"/>
    <property type="evidence" value="ECO:0007669"/>
    <property type="project" value="UniProtKB-KW"/>
</dbReference>
<dbReference type="GO" id="GO:0048574">
    <property type="term" value="P:long-day photoperiodism, flowering"/>
    <property type="evidence" value="ECO:0000315"/>
    <property type="project" value="UniProtKB"/>
</dbReference>
<dbReference type="GO" id="GO:0045893">
    <property type="term" value="P:positive regulation of DNA-templated transcription"/>
    <property type="evidence" value="ECO:0000314"/>
    <property type="project" value="UniProtKB"/>
</dbReference>
<dbReference type="GO" id="GO:0006355">
    <property type="term" value="P:regulation of DNA-templated transcription"/>
    <property type="evidence" value="ECO:0000315"/>
    <property type="project" value="UniProtKB"/>
</dbReference>
<dbReference type="GO" id="GO:0048510">
    <property type="term" value="P:regulation of timing of transition from vegetative to reproductive phase"/>
    <property type="evidence" value="ECO:0000315"/>
    <property type="project" value="UniProtKB"/>
</dbReference>
<dbReference type="GO" id="GO:0048575">
    <property type="term" value="P:short-day photoperiodism, flowering"/>
    <property type="evidence" value="ECO:0000315"/>
    <property type="project" value="UniProtKB"/>
</dbReference>
<dbReference type="FunFam" id="3.30.160.60:FF:000554">
    <property type="entry name" value="protein indeterminate-domain 12-like"/>
    <property type="match status" value="1"/>
</dbReference>
<dbReference type="FunFam" id="3.30.160.60:FF:000131">
    <property type="entry name" value="protein indeterminate-domain 5, chloroplastic-like"/>
    <property type="match status" value="1"/>
</dbReference>
<dbReference type="Gene3D" id="3.30.160.60">
    <property type="entry name" value="Classic Zinc Finger"/>
    <property type="match status" value="1"/>
</dbReference>
<dbReference type="InterPro" id="IPR055187">
    <property type="entry name" value="C2CH-3rd_BIRD-IDD"/>
</dbReference>
<dbReference type="InterPro" id="IPR055185">
    <property type="entry name" value="C2CH-4th_BIRD-IDD"/>
</dbReference>
<dbReference type="InterPro" id="IPR055186">
    <property type="entry name" value="C2H2-2nd_BIRD-IDD"/>
</dbReference>
<dbReference type="InterPro" id="IPR031140">
    <property type="entry name" value="IDD1-16"/>
</dbReference>
<dbReference type="InterPro" id="IPR036236">
    <property type="entry name" value="Znf_C2H2_sf"/>
</dbReference>
<dbReference type="InterPro" id="IPR013087">
    <property type="entry name" value="Znf_C2H2_type"/>
</dbReference>
<dbReference type="PANTHER" id="PTHR10593:SF136">
    <property type="entry name" value="PROTEIN INDETERMINATE-DOMAIN 12"/>
    <property type="match status" value="1"/>
</dbReference>
<dbReference type="PANTHER" id="PTHR10593">
    <property type="entry name" value="SERINE/THREONINE-PROTEIN KINASE RIO"/>
    <property type="match status" value="1"/>
</dbReference>
<dbReference type="Pfam" id="PF22995">
    <property type="entry name" value="C2CH-3rd_BIRD-IDD"/>
    <property type="match status" value="1"/>
</dbReference>
<dbReference type="Pfam" id="PF22992">
    <property type="entry name" value="C2CH-4th_BIRD-IDD"/>
    <property type="match status" value="1"/>
</dbReference>
<dbReference type="Pfam" id="PF22996">
    <property type="entry name" value="C2H2-2nd_BIRD-IDD"/>
    <property type="match status" value="1"/>
</dbReference>
<dbReference type="Pfam" id="PF12874">
    <property type="entry name" value="zf-met"/>
    <property type="match status" value="1"/>
</dbReference>
<dbReference type="SMART" id="SM00355">
    <property type="entry name" value="ZnF_C2H2"/>
    <property type="match status" value="3"/>
</dbReference>
<dbReference type="SUPFAM" id="SSF57667">
    <property type="entry name" value="beta-beta-alpha zinc fingers"/>
    <property type="match status" value="1"/>
</dbReference>
<dbReference type="PROSITE" id="PS00028">
    <property type="entry name" value="ZINC_FINGER_C2H2_1"/>
    <property type="match status" value="1"/>
</dbReference>
<dbReference type="PROSITE" id="PS50157">
    <property type="entry name" value="ZINC_FINGER_C2H2_2"/>
    <property type="match status" value="1"/>
</dbReference>
<sequence length="475" mass="50672">MLLSDLSSDQEATGSNSHGGGGGDRMVVGSHGAAHVVLSNLFLPPAAAAAATMLLPAAPVMVRPAAMAAAQEPRAKKKRSLPGNPDPEAEVIALSPRALVATNRFVCEVCNKGFQRDQNLQLHRRGHNLPWKLRHRAAAVSAVTTAAPAPRKRVYVCPEPTCVHHDPARALGDLTGIKKHFSRKHGEKRWRCERCGKRYAVHSDWKAHVKNCGTREYRCDCGILFSRKDSLLTHRAFCDALAEESARLLAAANNSSSITTTTCNNSNISSNNNNNNINSISNSNNLLITSSSSSPPLFLPFSTTPAENPNPNQLLFLQQHQAAHHQLLLPQFQQPPSSPPAYFDHLAFGGGGGVITGSSCNDDNSSIAGDVMVAAGGDSVSFGLTSEGSVTMHAGDVGRRRLTRDFLGVDHDAGEVDELELDELPADLSTTAAACQGCNFAAATTAACCATDFTTGSRQYLGRLPPVNETWSHNF</sequence>
<keyword id="KW-0010">Activator</keyword>
<keyword id="KW-0479">Metal-binding</keyword>
<keyword id="KW-0539">Nucleus</keyword>
<keyword id="KW-1185">Reference proteome</keyword>
<keyword id="KW-0677">Repeat</keyword>
<keyword id="KW-0804">Transcription</keyword>
<keyword id="KW-0805">Transcription regulation</keyword>
<keyword id="KW-0862">Zinc</keyword>
<keyword id="KW-0863">Zinc-finger</keyword>
<protein>
    <recommendedName>
        <fullName evidence="15">Protein EARLY HEADING DATE 2</fullName>
        <shortName evidence="15">Ehd2</shortName>
    </recommendedName>
    <alternativeName>
        <fullName evidence="13">Protein RICE INDETERMINATE 1</fullName>
        <shortName evidence="12">OsID</shortName>
        <shortName evidence="14">OsID1</shortName>
    </alternativeName>
</protein>
<name>EHD2_ORYSJ</name>
<accession>B1B534</accession>
<accession>A3C4T1</accession>
<accession>Q7XEJ8</accession>
<feature type="chain" id="PRO_0000447325" description="Protein EARLY HEADING DATE 2">
    <location>
        <begin position="1"/>
        <end position="475"/>
    </location>
</feature>
<feature type="zinc finger region" description="C2H2-type 1" evidence="2">
    <location>
        <begin position="105"/>
        <end position="127"/>
    </location>
</feature>
<feature type="zinc finger region" description="C2H2-type 2" evidence="1">
    <location>
        <begin position="155"/>
        <end position="185"/>
    </location>
</feature>
<feature type="zinc finger region" description="C2H2-type 2; degenerate" evidence="2">
    <location>
        <begin position="190"/>
        <end position="213"/>
    </location>
</feature>
<feature type="zinc finger region" description="CCHC-type 2; atypical" evidence="1">
    <location>
        <begin position="217"/>
        <end position="240"/>
    </location>
</feature>
<feature type="region of interest" description="Disordered" evidence="4">
    <location>
        <begin position="1"/>
        <end position="26"/>
    </location>
</feature>
<feature type="region of interest" description="SHR-binding" evidence="1">
    <location>
        <begin position="227"/>
        <end position="239"/>
    </location>
</feature>
<feature type="short sequence motif" description="Nuclear localization signal 1" evidence="3">
    <location>
        <begin position="123"/>
        <end position="130"/>
    </location>
</feature>
<feature type="short sequence motif" description="Nuclear localization signal 2" evidence="3">
    <location>
        <begin position="177"/>
        <end position="184"/>
    </location>
</feature>
<feature type="compositionally biased region" description="Polar residues" evidence="4">
    <location>
        <begin position="1"/>
        <end position="16"/>
    </location>
</feature>
<feature type="binding site" evidence="1">
    <location>
        <position position="192"/>
    </location>
    <ligand>
        <name>Zn(2+)</name>
        <dbReference type="ChEBI" id="CHEBI:29105"/>
        <label>1</label>
    </ligand>
</feature>
<feature type="binding site" evidence="1">
    <location>
        <position position="195"/>
    </location>
    <ligand>
        <name>Zn(2+)</name>
        <dbReference type="ChEBI" id="CHEBI:29105"/>
        <label>1</label>
    </ligand>
</feature>
<feature type="binding site" evidence="1">
    <location>
        <position position="208"/>
    </location>
    <ligand>
        <name>Zn(2+)</name>
        <dbReference type="ChEBI" id="CHEBI:29105"/>
        <label>1</label>
    </ligand>
</feature>
<feature type="binding site" evidence="1">
    <location>
        <position position="212"/>
    </location>
    <ligand>
        <name>Zn(2+)</name>
        <dbReference type="ChEBI" id="CHEBI:29105"/>
        <label>1</label>
    </ligand>
</feature>
<feature type="binding site" evidence="1">
    <location>
        <position position="219"/>
    </location>
    <ligand>
        <name>Zn(2+)</name>
        <dbReference type="ChEBI" id="CHEBI:29105"/>
        <label>2</label>
    </ligand>
</feature>
<feature type="binding site" evidence="1">
    <location>
        <position position="221"/>
    </location>
    <ligand>
        <name>Zn(2+)</name>
        <dbReference type="ChEBI" id="CHEBI:29105"/>
        <label>2</label>
    </ligand>
</feature>
<feature type="binding site" evidence="1">
    <location>
        <position position="234"/>
    </location>
    <ligand>
        <name>Zn(2+)</name>
        <dbReference type="ChEBI" id="CHEBI:29105"/>
        <label>2</label>
    </ligand>
</feature>
<feature type="binding site" evidence="1">
    <location>
        <position position="238"/>
    </location>
    <ligand>
        <name>Zn(2+)</name>
        <dbReference type="ChEBI" id="CHEBI:29105"/>
        <label>2</label>
    </ligand>
</feature>
<feature type="mutagenesis site" description="In ghd10; delayed flowering time, tall stalks and increased panicle length and primary branch number, thus leading to increased grains yield. Reduced expression of EHD1, HD1, RFT1, HD3A and MADS15 under both short-days (SD) and long-days (LD) conditions." evidence="8">
    <original>P</original>
    <variation>L</variation>
    <location>
        <position position="158"/>
    </location>
</feature>
<comment type="function">
    <text evidence="5 6 7 8 16">Transcription activator that acts as a flowering master switch in both long and short days, independently of the circadian clock (PubMed:18725639, PubMed:18774969, PubMed:18790997, PubMed:19304997, PubMed:24280027). Promotes flowering upstream of HD1 by up-regulating FTL1, FTL4, FTL5, FTL6, EHD1, HD3A and RFT1 (PubMed:18725639, PubMed:18774969, PubMed:18790997). Seems to repress FTL11 expression (PubMed:18725639). May recognize the consensus motif 5'-TTTGTCGTAAT-3' in target gene promoters (PubMed:18725639).</text>
</comment>
<comment type="subcellular location">
    <subcellularLocation>
        <location evidence="3 5 6 8">Nucleus</location>
    </subcellularLocation>
</comment>
<comment type="tissue specificity">
    <text evidence="5 6 7 8">Mostly expressed in developing leaves (more in sheaths than in blades, especially in the outer epidermal cell of immature leaves and in the region immediately beneath the meristem where internodes are visible) and panicles, and, at very low levels, around the shoot apex and in roots.</text>
</comment>
<comment type="developmental stage">
    <text evidence="6 7">Detected in young expanded leaves emerging from the culms (PubMed:18774969). In young panicles, accumulates in spikelets and panicle branches (PubMed:18774969). Under short days (SD), observed in leaves by 1 week after germination and reaches a peak by 2 weeks. Subsequently, the level gradually decreases, but maintains at low levels even after flowering (about 9 weeks) (PubMed:18790997). Under long days (LD), present in leaves at low levels during all developmental stages from at least 1 week after germination (PubMed:18790997).</text>
</comment>
<comment type="induction">
    <text evidence="9 10 11">Induced by FKF1 (PubMed:25850808). Down-regulated by DLF1 (PubMed:25036785). During the basic vegetative growth phase (BVP, photoperiod-insensitive phase), suppressed via phytochrome-mediated light signals involving the phytochromobilin synthase HY2 (PubMed:25573482).</text>
</comment>
<comment type="disruption phenotype">
    <text evidence="5 6 7">Never-flowering phenotype in the rid1 mutant (PubMed:18725639). Extremely delayed flowering under both short- (SD) and long-day (LD) conditions, associated with reduced EHD1, HD3A and RFT1 levels, but increased leaves and nodes production (PubMed:18725639, PubMed:18774969, PubMed:18790997). Levels of FTL1 and FTL4 are slightly reduced under both LD and SD, expression of FTL5 is down-regulated under LD, whereas FTL6 is down-regulated only under SD (PubMed:18725639). In contrast, the accumulation of FTL11 is slightly higher under both SD and LD (PubMed:18725639). Reduced levels of MADS1, MADS14 and MADS15, downstream genes of EHD1 (PubMed:18774969).</text>
</comment>
<comment type="sequence caution" evidence="18">
    <conflict type="erroneous initiation">
        <sequence resource="EMBL-CDS" id="AAP53791"/>
    </conflict>
    <text>Truncated N-terminus.</text>
</comment>
<comment type="sequence caution" evidence="18">
    <conflict type="erroneous initiation">
        <sequence resource="EMBL-CDS" id="BAF26530"/>
    </conflict>
    <text>Truncated N-terminus.</text>
</comment>
<comment type="sequence caution" evidence="18">
    <conflict type="erroneous gene model prediction">
        <sequence resource="EMBL-CDS" id="EAZ16094"/>
    </conflict>
</comment>
<comment type="sequence caution" evidence="18">
    <conflict type="frameshift">
        <sequence resource="EMBL-CDS" id="EAZ16094"/>
    </conflict>
</comment>
<proteinExistence type="evidence at protein level"/>